<dbReference type="EC" id="2.7.7.48" evidence="2"/>
<dbReference type="EC" id="3.6.1.-" evidence="2"/>
<dbReference type="EC" id="2.7.7.88" evidence="2"/>
<dbReference type="EC" id="2.1.1.375" evidence="1"/>
<dbReference type="EMBL" id="AF254574">
    <property type="protein sequence ID" value="AAF71286.1"/>
    <property type="molecule type" value="Genomic_RNA"/>
</dbReference>
<dbReference type="EMBL" id="AY911262">
    <property type="protein sequence ID" value="AAX23996.1"/>
    <property type="molecule type" value="Genomic_RNA"/>
</dbReference>
<dbReference type="EMBL" id="MT994243">
    <property type="protein sequence ID" value="QXO84955.1"/>
    <property type="molecule type" value="Genomic_RNA"/>
</dbReference>
<dbReference type="EMBL" id="KF713490">
    <property type="protein sequence ID" value="AHC94766.1"/>
    <property type="molecule type" value="Viral_cRNA"/>
</dbReference>
<dbReference type="EMBL" id="KF713491">
    <property type="protein sequence ID" value="AHC94778.1"/>
    <property type="molecule type" value="Viral_cRNA"/>
</dbReference>
<dbReference type="EMBL" id="KF713492">
    <property type="protein sequence ID" value="AHC94790.1"/>
    <property type="molecule type" value="Viral_cRNA"/>
</dbReference>
<dbReference type="EMBL" id="KU707921">
    <property type="protein sequence ID" value="AMQ35404.1"/>
    <property type="molecule type" value="Genomic_RNA"/>
</dbReference>
<dbReference type="EMBL" id="KX348546">
    <property type="protein sequence ID" value="API65192.1"/>
    <property type="molecule type" value="Genomic_RNA"/>
</dbReference>
<dbReference type="EMBL" id="MK816924">
    <property type="protein sequence ID" value="QFX69127.1"/>
    <property type="molecule type" value="Genomic_RNA"/>
</dbReference>
<dbReference type="EMBL" id="MW039343">
    <property type="protein sequence ID" value="QPB74367.1"/>
    <property type="molecule type" value="Viral_cRNA"/>
</dbReference>
<dbReference type="EMBL" id="MT994242">
    <property type="protein sequence ID" value="QXO84944.1"/>
    <property type="molecule type" value="Genomic_RNA"/>
</dbReference>
<dbReference type="EMBL" id="M17245">
    <property type="protein sequence ID" value="AAA47417.1"/>
    <property type="molecule type" value="Genomic_RNA"/>
</dbReference>
<dbReference type="SMR" id="Q9IWW8"/>
<dbReference type="IntAct" id="Q9IWW8">
    <property type="interactions" value="3"/>
</dbReference>
<dbReference type="BindingDB" id="Q9IWW8"/>
<dbReference type="Proteomes" id="UP000103294">
    <property type="component" value="Genome"/>
</dbReference>
<dbReference type="Proteomes" id="UP000119304">
    <property type="component" value="Genome"/>
</dbReference>
<dbReference type="Proteomes" id="UP000130886">
    <property type="component" value="Genome"/>
</dbReference>
<dbReference type="Proteomes" id="UP000158141">
    <property type="component" value="Genome"/>
</dbReference>
<dbReference type="Proteomes" id="UP000163705">
    <property type="component" value="Genome"/>
</dbReference>
<dbReference type="GO" id="GO:0030430">
    <property type="term" value="C:host cell cytoplasm"/>
    <property type="evidence" value="ECO:0007669"/>
    <property type="project" value="UniProtKB-SubCell"/>
</dbReference>
<dbReference type="GO" id="GO:0044423">
    <property type="term" value="C:virion component"/>
    <property type="evidence" value="ECO:0007669"/>
    <property type="project" value="UniProtKB-KW"/>
</dbReference>
<dbReference type="GO" id="GO:0005524">
    <property type="term" value="F:ATP binding"/>
    <property type="evidence" value="ECO:0007669"/>
    <property type="project" value="UniProtKB-KW"/>
</dbReference>
<dbReference type="GO" id="GO:0003924">
    <property type="term" value="F:GTPase activity"/>
    <property type="evidence" value="ECO:0007669"/>
    <property type="project" value="RHEA"/>
</dbReference>
<dbReference type="GO" id="GO:0046872">
    <property type="term" value="F:metal ion binding"/>
    <property type="evidence" value="ECO:0007669"/>
    <property type="project" value="UniProtKB-KW"/>
</dbReference>
<dbReference type="GO" id="GO:0004482">
    <property type="term" value="F:mRNA 5'-cap (guanine-N7-)-methyltransferase activity"/>
    <property type="evidence" value="ECO:0007669"/>
    <property type="project" value="InterPro"/>
</dbReference>
<dbReference type="GO" id="GO:0003968">
    <property type="term" value="F:RNA-directed RNA polymerase activity"/>
    <property type="evidence" value="ECO:0007669"/>
    <property type="project" value="UniProtKB-KW"/>
</dbReference>
<dbReference type="InterPro" id="IPR039530">
    <property type="entry name" value="L_methyltransferase_rhabdo"/>
</dbReference>
<dbReference type="InterPro" id="IPR039736">
    <property type="entry name" value="L_poly_C"/>
</dbReference>
<dbReference type="InterPro" id="IPR026890">
    <property type="entry name" value="Mononeg_mRNAcap"/>
</dbReference>
<dbReference type="InterPro" id="IPR014023">
    <property type="entry name" value="Mononeg_RNA_pol_cat"/>
</dbReference>
<dbReference type="InterPro" id="IPR025786">
    <property type="entry name" value="Mononega_L_MeTrfase"/>
</dbReference>
<dbReference type="InterPro" id="IPR016269">
    <property type="entry name" value="RNA-dir_pol_paramyxovirus"/>
</dbReference>
<dbReference type="NCBIfam" id="TIGR04198">
    <property type="entry name" value="paramyx_RNAcap"/>
    <property type="match status" value="1"/>
</dbReference>
<dbReference type="Pfam" id="PF14314">
    <property type="entry name" value="Methyltrans_Mon_2nd"/>
    <property type="match status" value="1"/>
</dbReference>
<dbReference type="Pfam" id="PF14318">
    <property type="entry name" value="Mononeg_mRNAcap"/>
    <property type="match status" value="1"/>
</dbReference>
<dbReference type="Pfam" id="PF00946">
    <property type="entry name" value="Mononeg_RNA_pol"/>
    <property type="match status" value="1"/>
</dbReference>
<dbReference type="PIRSF" id="PIRSF000830">
    <property type="entry name" value="RNA_pol_ParamyxoV"/>
    <property type="match status" value="1"/>
</dbReference>
<dbReference type="PROSITE" id="PS50526">
    <property type="entry name" value="RDRP_SSRNA_NEG_NONSEG"/>
    <property type="match status" value="1"/>
</dbReference>
<dbReference type="PROSITE" id="PS51590">
    <property type="entry name" value="SAM_MT_MNV_L"/>
    <property type="match status" value="1"/>
</dbReference>
<organism>
    <name type="scientific">Human respiratory syncytial virus</name>
    <dbReference type="NCBI Taxonomy" id="11250"/>
    <lineage>
        <taxon>Viruses</taxon>
        <taxon>Riboviria</taxon>
        <taxon>Orthornavirae</taxon>
        <taxon>Negarnaviricota</taxon>
        <taxon>Haploviricotina</taxon>
        <taxon>Monjiviricetes</taxon>
        <taxon>Mononegavirales</taxon>
        <taxon>Pneumoviridae</taxon>
        <taxon>Orthopneumovirus</taxon>
        <taxon>Orthopneumovirus hominis</taxon>
    </lineage>
</organism>
<reference key="1">
    <citation type="submission" date="2000-04" db="EMBL/GenBank/DDBJ databases">
        <title>Human respiratory syncytial virus phosphoprotein plays a central role in the interaction of ribonucleoprotein components and modulates the phosphorylated state of the 22k transcriptional anti-terminator.</title>
        <authorList>
            <person name="Martinez L."/>
            <person name="Delgado T."/>
            <person name="Melero J."/>
            <person name="Garcia-Barreno B."/>
        </authorList>
    </citation>
    <scope>NUCLEOTIDE SEQUENCE [GENOMIC RNA]</scope>
    <scope>VARIANTS ASN-757; ARG-1649 AND TYR-1789</scope>
</reference>
<reference key="2">
    <citation type="journal article" date="2005" name="J. Virol.">
        <title>Respiratory syncytial virus nonstructural proteins NS1 and NS2 mediate inhibition of Stat2 expression and alpha/beta interferon responsiveness.</title>
        <authorList>
            <person name="Lo M.S."/>
            <person name="Brazas R.M."/>
            <person name="Holtzman M.J."/>
        </authorList>
    </citation>
    <scope>NUCLEOTIDE SEQUENCE [LARGE SCALE GENOMIC RNA]</scope>
    <source>
        <strain>ATCC VR-26</strain>
    </source>
</reference>
<reference key="3">
    <citation type="journal article" date="2019" name="Sci. Rep.">
        <title>The Interactome analysis of the Respiratory Syncytial Virus protein M2-1 suggests a new role in viral mRNA metabolism post-transcription.</title>
        <authorList>
            <person name="Bouillier C."/>
            <person name="Cosentino G."/>
            <person name="Leger T."/>
            <person name="Rincheval V."/>
            <person name="Richard C.A."/>
            <person name="Desquesnes A."/>
            <person name="Sitterlin D."/>
            <person name="Blouquit-Laye S."/>
            <person name="Eleouet J.F."/>
            <person name="Gault E."/>
            <person name="Rameix-Welti M.A."/>
        </authorList>
    </citation>
    <scope>NUCLEOTIDE SEQUENCE [GENOMIC RNA]</scope>
</reference>
<reference key="4">
    <citation type="journal article" date="2021" name="Nature">
        <title>A condensate-hardening drug blocks RSV replication in vivo.</title>
        <authorList>
            <person name="Risso-Ballester J."/>
            <person name="Galloux M."/>
            <person name="Cao J."/>
            <person name="Le Goffic R."/>
            <person name="Hontonnou F."/>
            <person name="Jobart-Malfait A."/>
            <person name="Desquesnes A."/>
            <person name="Sake S.M."/>
            <person name="Haid S."/>
            <person name="Du M."/>
            <person name="Zhang X."/>
            <person name="Zhang H."/>
            <person name="Wang Z."/>
            <person name="Rincheval V."/>
            <person name="Zhang Y."/>
            <person name="Pietschmann T."/>
            <person name="Eleouet J.F."/>
            <person name="Rameix-Welti M.A."/>
            <person name="Altmeyer R."/>
        </authorList>
    </citation>
    <scope>NUCLEOTIDE SEQUENCE [GENOMIC RNA]</scope>
</reference>
<reference key="5">
    <citation type="journal article" date="1987" name="Proc. Natl. Acad. Sci. U.S.A.">
        <title>Gene overlap and site-specific attenuation of transcription of the viral polymerase L gene of human respiratory syncytial virus.</title>
        <authorList>
            <person name="Collins P.L."/>
            <person name="Olmsted R.A."/>
            <person name="Spriggs M.K."/>
            <person name="Johnson P.R."/>
            <person name="Buckler-White A.J."/>
        </authorList>
    </citation>
    <scope>NUCLEOTIDE SEQUENCE [GENOMIC RNA] OF 1-81</scope>
</reference>
<sequence length="2165" mass="250415">MDPIINGNSANVYLTDSYLKGVISFSECNALGSYIFNGPYLKNDYTNLISRQNPLIEHMNLKKLNITQSLISKYHKGEIKLEEPTYFQSLLMTYKSMTSLEQIATTNLLKKIIRRAIEISDVKVYAILNKLGLKEKDKIKSNNGQDEDNSVITTIIKDDILSAVKDNQSHLKADKNHSTKQKDTIKTTLLKKLMCSMQHPPSWLIHWFNLYTKLNNILTQYRSNEVKNHGFILIDNQTLSGFQFILNQYGCIVYHKELKRITVTTYNQFLTWKDISLSRLNVCLITWISNCLNTLNKSLGLRCGFNNVILTQLFLYGDCILKLFHNEGFYIIKEVEGFIMSLILNITEEDQFRKRFYNSMLNNITDAANKAQKNLLSRVCHTLLDKTVSDNIINGRWIILLSKFLKLIKLAGDNNLNNLSELYFLFRIFGHPMVDERQAMDAVKVNCNETKFYLLSSLSMLRGAFIYRIIKGFVNNYNRWPTLRNAIVLPLRWLTYYKLNTYPSLLELTERDLIVLSGLRFYREFRLPKKVDLEMIINDKAISPPKNLIWTSFPRNYMPSHIQNYIEHEKLKFSESDKSRRVLEYYLRDNKFNECDLYNCVVNQSYLNNPNHVVSLTGKERELSVGRMFAMQPGMFRQVQILAEKMIAENILQFFPESLTRYGDLELQKILELKAGISNKSNRYNDNYNNYISKCSIITDLSKFNQAFRYETSCICSDVLDELHGVQSLFSWLHLTIPHVTIICTYRHAPPYIRDHIVDLNNVDEQSGLYRYHMGGIEGWCQKLWTIEAISLLDLISLKGKFSITALINGDNQSIDISKPVRLMEGQTHAQADYLLALNSLKLLYKEYAGIGHKLKGTETYISRDMQFMSKTIQHNGVYYPASIKKVLRVGPWINTILDDFKVSLESIGSLTQELEYRGESLLCSLIFRNVWLYNQIALQLKNHALCNNKLYLDILKVLKHLKTFFNLDNIDTALTLYMNLPMLFGGGDPNLLYRSFYRRTPDFLTEAIVHSVFILSYYTNHDLKDKLQDLSDDRLNKFLTCIITFDKNPNAEFVTLMRDPQALGSERQAKITSEINRLAVTEVLSTAPNKIFSKSAQHYTTTEIDLNDIMQNIEPTYPHGLRVVYESLPFYKAEKIVNLISGTKSITNILEKTSAIDLTDIDRATEMMRKNITLLIRILPLDCNRDKREILSMENLSITELSKYVRERSWSLSNIVGVTSPSIMYTMDIKYTTSTIASGIIIEKYNVNSLTRGERGPTKPWVGSSTQEKKTMPVYNRQVLTKKQRDQIDLLAKLDWVYASIDNKDEFMEELSIGTLGLTYEKAKKLFPQYLSVNYLHRLTVSSRPCEFPASIPAYRTTNYHFDTSPINRILTEKYGDEDIDIVFQNCISFGLSLMSVVEQFTNVCPNRIILIPKLNEIHLMKPPIFTGDVDIHKLKQVIQKQHMFLPDKISLTQYVELFLSNKTLKSGSHVNSNLILAHKISDYFHNTYILSTNLAGHWILIIQLMKDSKGIFEKDWGEGYITDHMFINLKVFFNAYKTYLLCFHKGYGKAKLECDMNTSDLLCVLELIDSSYWKSMSKVFLEQKVIKYILSQDASLHRVKGCHSFKLWFLKRLNVAEFTVCPWVVNIDYHPTHMKAILTYIDLVRMGLINIDRIHIKNKHKFNDEFYTSNLFYINYNFSDNTHLLTKHIRIANSELENNYNKLYHPTPETLENILANPIKSNDKKTLNDYCIGKNVDSIMLPLLSNKKLVKSSAMIRTNYSKQDLYNLFPTVVIDRIIDHSGNTAKSNQLYTTTSHQISLVHNSTSLYCMLPWHHINRFNFVFSSTGCKISIEYILKDLKIKDPNCIAFIGEGAGNLLLRTVVELHPDIRYIYRSLKDCNDHSLPIEFLRLYNGHINIDYGENLTIPATDATNNIHWSYLHIKFAEPISLFVCDAELPVTVNWSKIIIEWSKHVRKCKYCSSVNKCTLIVKYHAQDDIDFKLDNITILKTYVCLGSKLKGSEVYLVLTIGPANIFPVFNVVQNAKLILSRTKNFIMPKKADKESIDANIKSLIPFLCYPITKKGINTALSKLKSVVSGDILSYSIAGRNEVFSNKLINHKHMNILKWFNHVLNFRSTELNYNHLYMVESTYPYLSELLNSLTTNELKKLIKITGSLLYNFHNE</sequence>
<name>L_HRSV</name>
<accession>Q9IWW8</accession>
<accession>P20894</accession>
<accession>Q4KRW1</accession>
<organismHost>
    <name type="scientific">Homo sapiens</name>
    <name type="common">Human</name>
    <dbReference type="NCBI Taxonomy" id="9606"/>
</organismHost>
<feature type="chain" id="PRO_0000365787" description="RNA-directed RNA polymerase L">
    <location>
        <begin position="1"/>
        <end position="2165"/>
    </location>
</feature>
<feature type="domain" description="RdRp catalytic" evidence="4">
    <location>
        <begin position="693"/>
        <end position="877"/>
    </location>
</feature>
<feature type="domain" description="Mononegavirus-type SAM-dependent 2'-O-MTase" evidence="5">
    <location>
        <begin position="1820"/>
        <end position="2008"/>
    </location>
</feature>
<feature type="region of interest" description="GDP polyribonucleotidyltransferase" evidence="2">
    <location>
        <begin position="968"/>
        <end position="1460"/>
    </location>
</feature>
<feature type="active site" description="Nucleophile; for GDP polyribonucleotidyltransferase activity" evidence="1">
    <location>
        <position position="1338"/>
    </location>
</feature>
<feature type="active site" description="For mRNA (nucleoside-2'-O-)-methyltransferase activity" evidence="3">
    <location>
        <position position="1831"/>
    </location>
</feature>
<feature type="active site" description="For mRNA (nucleoside-2'-O-)-methyltransferase activity" evidence="3">
    <location>
        <position position="1936"/>
    </location>
</feature>
<feature type="active site" description="For mRNA (nucleoside-2'-O-)-methyltransferase activity" evidence="3">
    <location>
        <position position="1973"/>
    </location>
</feature>
<feature type="active site" description="For mRNA (nucleoside-2'-O-)-methyltransferase activity" evidence="3">
    <location>
        <position position="2004"/>
    </location>
</feature>
<feature type="binding site" evidence="2">
    <location>
        <position position="700"/>
    </location>
    <ligand>
        <name>Mg(2+)</name>
        <dbReference type="ChEBI" id="CHEBI:18420"/>
        <note>catalytic; for RNA-directed RNA polymerase activity</note>
    </ligand>
</feature>
<feature type="binding site" evidence="2">
    <location>
        <position position="811"/>
    </location>
    <ligand>
        <name>Mg(2+)</name>
        <dbReference type="ChEBI" id="CHEBI:18420"/>
        <note>catalytic; for RNA-directed RNA polymerase activity</note>
    </ligand>
</feature>
<feature type="binding site" evidence="3">
    <location>
        <begin position="1853"/>
        <end position="1857"/>
    </location>
    <ligand>
        <name>substrate</name>
        <note>for mRNA (nucleoside-2'-O-)-methyltransferase activity</note>
    </ligand>
</feature>
<feature type="sequence variant" evidence="6">
    <original>I</original>
    <variation>N</variation>
    <location>
        <position position="757"/>
    </location>
</feature>
<feature type="sequence variant" evidence="6">
    <original>G</original>
    <variation>R</variation>
    <location>
        <position position="1649"/>
    </location>
</feature>
<feature type="sequence variant" evidence="6">
    <original>S</original>
    <variation>Y</variation>
    <location>
        <position position="1789"/>
    </location>
</feature>
<keyword id="KW-0067">ATP-binding</keyword>
<keyword id="KW-1035">Host cytoplasm</keyword>
<keyword id="KW-0378">Hydrolase</keyword>
<keyword id="KW-0460">Magnesium</keyword>
<keyword id="KW-0479">Metal-binding</keyword>
<keyword id="KW-0489">Methyltransferase</keyword>
<keyword id="KW-0506">mRNA capping</keyword>
<keyword id="KW-0507">mRNA processing</keyword>
<keyword id="KW-0511">Multifunctional enzyme</keyword>
<keyword id="KW-0547">Nucleotide-binding</keyword>
<keyword id="KW-0548">Nucleotidyltransferase</keyword>
<keyword id="KW-0696">RNA-directed RNA polymerase</keyword>
<keyword id="KW-0949">S-adenosyl-L-methionine</keyword>
<keyword id="KW-0808">Transferase</keyword>
<keyword id="KW-0693">Viral RNA replication</keyword>
<keyword id="KW-0946">Virion</keyword>
<comment type="function">
    <text evidence="1 2">Responsible for RNA synthesis (replicase and transcriptase), cap addition, and cap methylation. Also performs the polyadenylation of subgenomic mRNAs by a stuttering mechanism at a slipery stop site present at the end of viral genes. The template is composed of the viral RNA tightly encapsidated by the nucleoprotein (N). The viral polymerase binds to the genomic RNA at two different sites in the 3' leader promoter thereby initiating either genome replication or mRNA transcription. In the transcription mode, the polymerase performs the sequential transcription of all mRNAs using a termination-reinitiation mechanism responding to gene start and gene end signals. Some polymerase disengage from the template at each gene junction, resulting in a decreasing abundance of transcripts from the 3' to the 5' end of the genome. The first gene is the most transcribed, and the last the least transcribed. Needs as cofactors the phosphoprotein for processivity and the M2-1 anti-termination protein. Polyribonucleotidyl transferase (PRNTase) adds the cap structure when the nascent RNA chain length has reached few nucleotides (By similarity). Ribose 2'-O methylation of viral mRNA cap precedes and facilitates subsequent guanine-N-7 methylation (By similarity). In the replication mode, the polymerase replicates the whole viral genome without recognizing the gene end transcriptional signals. The ability of the polymerase to override the gene end signals as it is producing the antigenome is probably due to replicative RNA becoming encapsidated with nucleoprotein as it is synthesized (By similarity).</text>
</comment>
<comment type="catalytic activity">
    <reaction evidence="4">
        <text>RNA(n) + a ribonucleoside 5'-triphosphate = RNA(n+1) + diphosphate</text>
        <dbReference type="Rhea" id="RHEA:21248"/>
        <dbReference type="Rhea" id="RHEA-COMP:14527"/>
        <dbReference type="Rhea" id="RHEA-COMP:17342"/>
        <dbReference type="ChEBI" id="CHEBI:33019"/>
        <dbReference type="ChEBI" id="CHEBI:61557"/>
        <dbReference type="ChEBI" id="CHEBI:140395"/>
        <dbReference type="EC" id="2.7.7.48"/>
    </reaction>
</comment>
<comment type="catalytic activity">
    <reaction evidence="2">
        <text>GTP + H2O = GDP + phosphate + H(+)</text>
        <dbReference type="Rhea" id="RHEA:19669"/>
        <dbReference type="ChEBI" id="CHEBI:15377"/>
        <dbReference type="ChEBI" id="CHEBI:15378"/>
        <dbReference type="ChEBI" id="CHEBI:37565"/>
        <dbReference type="ChEBI" id="CHEBI:43474"/>
        <dbReference type="ChEBI" id="CHEBI:58189"/>
    </reaction>
</comment>
<comment type="catalytic activity">
    <reaction evidence="2">
        <text>a 5'-end triphospho-adenylyl-adenylyl-cytidylyl-adenosine in mRNA + GDP + H(+) = a 5'-end (5'-triphosphoguanosine)-adenylyl-adenylyl-cytidylyl-adenosine in mRNA + diphosphate</text>
        <dbReference type="Rhea" id="RHEA:65436"/>
        <dbReference type="Rhea" id="RHEA-COMP:16797"/>
        <dbReference type="Rhea" id="RHEA-COMP:16799"/>
        <dbReference type="ChEBI" id="CHEBI:15378"/>
        <dbReference type="ChEBI" id="CHEBI:33019"/>
        <dbReference type="ChEBI" id="CHEBI:58189"/>
        <dbReference type="ChEBI" id="CHEBI:156484"/>
        <dbReference type="ChEBI" id="CHEBI:156503"/>
        <dbReference type="EC" id="2.7.7.88"/>
    </reaction>
</comment>
<comment type="catalytic activity">
    <reaction evidence="1">
        <text>a 5'-end (5'-triphosphoguanosine)-adenylyl-adenylyl-cytidylyl-adenosine in mRNA + 2 S-adenosyl-L-methionine = a 5'-end (N(7)-methyl 5'-triphosphoguanosine)-(2'-O-methyladenylyl)-adenylyl-cytidylyl-adenosine in mRNA + 2 S-adenosyl-L-homocysteine + H(+)</text>
        <dbReference type="Rhea" id="RHEA:65376"/>
        <dbReference type="Rhea" id="RHEA-COMP:16797"/>
        <dbReference type="Rhea" id="RHEA-COMP:16798"/>
        <dbReference type="ChEBI" id="CHEBI:15378"/>
        <dbReference type="ChEBI" id="CHEBI:57856"/>
        <dbReference type="ChEBI" id="CHEBI:59789"/>
        <dbReference type="ChEBI" id="CHEBI:156483"/>
        <dbReference type="ChEBI" id="CHEBI:156484"/>
        <dbReference type="EC" id="2.1.1.375"/>
    </reaction>
</comment>
<comment type="catalytic activity">
    <reaction evidence="1">
        <text>a 5'-end (5'-triphosphoguanosine)-adenylyl-adenylyl-cytidylyl-adenosine in mRNA + S-adenosyl-L-methionine = a 5'-end (5'-triphosphoguanosine)-(2'-O-methyladenylyl)-adenylyl-cytidylyl-adenosine in mRNA + S-adenosyl-L-homocysteine + H(+)</text>
        <dbReference type="Rhea" id="RHEA:65380"/>
        <dbReference type="Rhea" id="RHEA-COMP:16797"/>
        <dbReference type="Rhea" id="RHEA-COMP:16801"/>
        <dbReference type="ChEBI" id="CHEBI:15378"/>
        <dbReference type="ChEBI" id="CHEBI:57856"/>
        <dbReference type="ChEBI" id="CHEBI:59789"/>
        <dbReference type="ChEBI" id="CHEBI:156482"/>
        <dbReference type="ChEBI" id="CHEBI:156484"/>
    </reaction>
</comment>
<comment type="catalytic activity">
    <reaction evidence="1">
        <text>a 5'-end (5'-triphosphoguanosine)-(2'-O-methyladenylyl)-adenylyl-cytidylyl-adenosine in mRNA + S-adenosyl-L-methionine = a 5'-end (N(7)-methyl 5'-triphosphoguanosine)-(2'-O-methyladenylyl)-adenylyl-cytidylyl-adenosine in mRNA + S-adenosyl-L-homocysteine</text>
        <dbReference type="Rhea" id="RHEA:65440"/>
        <dbReference type="Rhea" id="RHEA-COMP:16798"/>
        <dbReference type="Rhea" id="RHEA-COMP:16801"/>
        <dbReference type="ChEBI" id="CHEBI:57856"/>
        <dbReference type="ChEBI" id="CHEBI:59789"/>
        <dbReference type="ChEBI" id="CHEBI:156482"/>
        <dbReference type="ChEBI" id="CHEBI:156483"/>
    </reaction>
</comment>
<comment type="cofactor">
    <cofactor evidence="2">
        <name>Mg(2+)</name>
        <dbReference type="ChEBI" id="CHEBI:18420"/>
    </cofactor>
    <text evidence="2">For RNA-directed RNA polymerase activity. Mn(2+) can stimulate de novo initiation but it is inefficient at supporting elongation of de novo initiated RNA.</text>
</comment>
<comment type="subunit">
    <text evidence="2">Interacts with the phosphoprotein (via C-terminus); the association of P and L forms the polymerase complex.</text>
</comment>
<comment type="subcellular location">
    <subcellularLocation>
        <location evidence="2">Virion</location>
    </subcellularLocation>
    <subcellularLocation>
        <location evidence="2">Host cytoplasm</location>
    </subcellularLocation>
    <text evidence="2">Localizes in cytoplasmic inclusion bodies.</text>
</comment>
<comment type="domain">
    <text evidence="2">Contains an RNA-dependent RNA polymerase (RdRp) domain, a polyribonucleotidyl transferase (PRNTase or capping) domain and a methyltransferase (MTase) domain.</text>
</comment>
<comment type="similarity">
    <text evidence="7">Belongs to the paramyxovirus L protein family.</text>
</comment>
<evidence type="ECO:0000250" key="1">
    <source>
        <dbReference type="UniProtKB" id="P03523"/>
    </source>
</evidence>
<evidence type="ECO:0000250" key="2">
    <source>
        <dbReference type="UniProtKB" id="P28887"/>
    </source>
</evidence>
<evidence type="ECO:0000250" key="3">
    <source>
        <dbReference type="UniProtKB" id="Q6WB93"/>
    </source>
</evidence>
<evidence type="ECO:0000255" key="4">
    <source>
        <dbReference type="PROSITE-ProRule" id="PRU00539"/>
    </source>
</evidence>
<evidence type="ECO:0000255" key="5">
    <source>
        <dbReference type="PROSITE-ProRule" id="PRU00923"/>
    </source>
</evidence>
<evidence type="ECO:0000269" key="6">
    <source ref="1"/>
</evidence>
<evidence type="ECO:0000305" key="7"/>
<proteinExistence type="inferred from homology"/>
<gene>
    <name type="primary">L</name>
</gene>
<protein>
    <recommendedName>
        <fullName>RNA-directed RNA polymerase L</fullName>
        <shortName>Protein L</shortName>
    </recommendedName>
    <alternativeName>
        <fullName>Large structural protein</fullName>
    </alternativeName>
    <alternativeName>
        <fullName>Replicase</fullName>
    </alternativeName>
    <alternativeName>
        <fullName>Transcriptase</fullName>
    </alternativeName>
    <domain>
        <recommendedName>
            <fullName>RNA-directed RNA polymerase</fullName>
            <ecNumber evidence="2">2.7.7.48</ecNumber>
        </recommendedName>
    </domain>
    <domain>
        <recommendedName>
            <fullName evidence="2">GTP phosphohydrolase</fullName>
            <ecNumber evidence="2">3.6.1.-</ecNumber>
        </recommendedName>
    </domain>
    <domain>
        <recommendedName>
            <fullName evidence="7">GDP polyribonucleotidyltransferase</fullName>
            <ecNumber evidence="2">2.7.7.88</ecNumber>
        </recommendedName>
        <alternativeName>
            <fullName evidence="7">PRNTase</fullName>
        </alternativeName>
    </domain>
    <domain>
        <recommendedName>
            <fullName evidence="7">mRNA cap methyltransferase</fullName>
            <ecNumber evidence="1">2.1.1.375</ecNumber>
        </recommendedName>
        <alternativeName>
            <fullName evidence="1">mRNA (guanine-N(7)-)-methyltransferase</fullName>
            <shortName evidence="1">G-N7-MTase</shortName>
        </alternativeName>
        <alternativeName>
            <fullName evidence="1">mRNA (nucleoside-2'-O-)-methyltransferase</fullName>
            <shortName evidence="1">N1-2'-O-MTase</shortName>
        </alternativeName>
    </domain>
</protein>